<dbReference type="EC" id="5.1.1.7" evidence="1"/>
<dbReference type="EMBL" id="CP001396">
    <property type="protein sequence ID" value="ACR62757.1"/>
    <property type="molecule type" value="Genomic_DNA"/>
</dbReference>
<dbReference type="RefSeq" id="WP_001160654.1">
    <property type="nucleotide sequence ID" value="NC_012759.1"/>
</dbReference>
<dbReference type="SMR" id="C4ZZ73"/>
<dbReference type="GeneID" id="93778134"/>
<dbReference type="KEGG" id="ebw:BWG_3488"/>
<dbReference type="HOGENOM" id="CLU_053306_1_1_6"/>
<dbReference type="UniPathway" id="UPA00034">
    <property type="reaction ID" value="UER00025"/>
</dbReference>
<dbReference type="GO" id="GO:0005829">
    <property type="term" value="C:cytosol"/>
    <property type="evidence" value="ECO:0007669"/>
    <property type="project" value="TreeGrafter"/>
</dbReference>
<dbReference type="GO" id="GO:0008837">
    <property type="term" value="F:diaminopimelate epimerase activity"/>
    <property type="evidence" value="ECO:0007669"/>
    <property type="project" value="UniProtKB-UniRule"/>
</dbReference>
<dbReference type="GO" id="GO:0009089">
    <property type="term" value="P:lysine biosynthetic process via diaminopimelate"/>
    <property type="evidence" value="ECO:0007669"/>
    <property type="project" value="UniProtKB-UniRule"/>
</dbReference>
<dbReference type="FunFam" id="3.10.310.10:FF:000001">
    <property type="entry name" value="Diaminopimelate epimerase"/>
    <property type="match status" value="1"/>
</dbReference>
<dbReference type="FunFam" id="3.10.310.10:FF:000002">
    <property type="entry name" value="Diaminopimelate epimerase"/>
    <property type="match status" value="1"/>
</dbReference>
<dbReference type="Gene3D" id="3.10.310.10">
    <property type="entry name" value="Diaminopimelate Epimerase, Chain A, domain 1"/>
    <property type="match status" value="2"/>
</dbReference>
<dbReference type="HAMAP" id="MF_00197">
    <property type="entry name" value="DAP_epimerase"/>
    <property type="match status" value="1"/>
</dbReference>
<dbReference type="InterPro" id="IPR018510">
    <property type="entry name" value="DAP_epimerase_AS"/>
</dbReference>
<dbReference type="InterPro" id="IPR001653">
    <property type="entry name" value="DAP_epimerase_DapF"/>
</dbReference>
<dbReference type="NCBIfam" id="TIGR00652">
    <property type="entry name" value="DapF"/>
    <property type="match status" value="1"/>
</dbReference>
<dbReference type="PANTHER" id="PTHR31689:SF0">
    <property type="entry name" value="DIAMINOPIMELATE EPIMERASE"/>
    <property type="match status" value="1"/>
</dbReference>
<dbReference type="PANTHER" id="PTHR31689">
    <property type="entry name" value="DIAMINOPIMELATE EPIMERASE, CHLOROPLASTIC"/>
    <property type="match status" value="1"/>
</dbReference>
<dbReference type="Pfam" id="PF01678">
    <property type="entry name" value="DAP_epimerase"/>
    <property type="match status" value="2"/>
</dbReference>
<dbReference type="SUPFAM" id="SSF54506">
    <property type="entry name" value="Diaminopimelate epimerase-like"/>
    <property type="match status" value="1"/>
</dbReference>
<dbReference type="PROSITE" id="PS01326">
    <property type="entry name" value="DAP_EPIMERASE"/>
    <property type="match status" value="1"/>
</dbReference>
<proteinExistence type="inferred from homology"/>
<name>DAPF_ECOBW</name>
<protein>
    <recommendedName>
        <fullName evidence="1">Diaminopimelate epimerase</fullName>
        <shortName evidence="1">DAP epimerase</shortName>
        <ecNumber evidence="1">5.1.1.7</ecNumber>
    </recommendedName>
    <alternativeName>
        <fullName evidence="1">PLP-independent amino acid racemase</fullName>
    </alternativeName>
</protein>
<comment type="function">
    <text evidence="1">Catalyzes the stereoinversion of LL-2,6-diaminopimelate (L,L-DAP) to meso-diaminopimelate (meso-DAP), a precursor of L-lysine and an essential component of the bacterial peptidoglycan.</text>
</comment>
<comment type="catalytic activity">
    <reaction evidence="1">
        <text>(2S,6S)-2,6-diaminopimelate = meso-2,6-diaminopimelate</text>
        <dbReference type="Rhea" id="RHEA:15393"/>
        <dbReference type="ChEBI" id="CHEBI:57609"/>
        <dbReference type="ChEBI" id="CHEBI:57791"/>
        <dbReference type="EC" id="5.1.1.7"/>
    </reaction>
</comment>
<comment type="pathway">
    <text evidence="1">Amino-acid biosynthesis; L-lysine biosynthesis via DAP pathway; DL-2,6-diaminopimelate from LL-2,6-diaminopimelate: step 1/1.</text>
</comment>
<comment type="subunit">
    <text evidence="1">Homodimer.</text>
</comment>
<comment type="subcellular location">
    <subcellularLocation>
        <location evidence="1">Cytoplasm</location>
    </subcellularLocation>
</comment>
<comment type="similarity">
    <text evidence="1">Belongs to the diaminopimelate epimerase family.</text>
</comment>
<sequence>MQFSKMHGLGNDFMVVDAVTQNVFFSPELIRRLADRHLGVGFDQLLVVEPPYDPELDFHYRIFNADGSEVAQCGNGARCFARFVRLKGLTNKRDIRVSTANGRMVLTVTDDDLVRVNMGEPNFEPSAVPFRANKAEKTYIMRAAEQTILCGVVSMGNPHCVIQVDDVDTAAVETLGPVLESHERFPERANIGFMQVVKREHIRLRVYERGAGETQACGSGACAAVAVGIQQGLLAEEVRVELPGGRLDIAWKGPGHPLYMTGPAVHVYDGFIHL</sequence>
<organism>
    <name type="scientific">Escherichia coli (strain K12 / MC4100 / BW2952)</name>
    <dbReference type="NCBI Taxonomy" id="595496"/>
    <lineage>
        <taxon>Bacteria</taxon>
        <taxon>Pseudomonadati</taxon>
        <taxon>Pseudomonadota</taxon>
        <taxon>Gammaproteobacteria</taxon>
        <taxon>Enterobacterales</taxon>
        <taxon>Enterobacteriaceae</taxon>
        <taxon>Escherichia</taxon>
    </lineage>
</organism>
<gene>
    <name evidence="1" type="primary">dapF</name>
    <name type="ordered locus">BWG_3488</name>
</gene>
<keyword id="KW-0028">Amino-acid biosynthesis</keyword>
<keyword id="KW-0963">Cytoplasm</keyword>
<keyword id="KW-0413">Isomerase</keyword>
<keyword id="KW-0457">Lysine biosynthesis</keyword>
<reference key="1">
    <citation type="journal article" date="2009" name="J. Bacteriol.">
        <title>Genomic sequencing reveals regulatory mutations and recombinational events in the widely used MC4100 lineage of Escherichia coli K-12.</title>
        <authorList>
            <person name="Ferenci T."/>
            <person name="Zhou Z."/>
            <person name="Betteridge T."/>
            <person name="Ren Y."/>
            <person name="Liu Y."/>
            <person name="Feng L."/>
            <person name="Reeves P.R."/>
            <person name="Wang L."/>
        </authorList>
    </citation>
    <scope>NUCLEOTIDE SEQUENCE [LARGE SCALE GENOMIC DNA]</scope>
    <source>
        <strain>K12 / MC4100 / BW2952</strain>
    </source>
</reference>
<evidence type="ECO:0000255" key="1">
    <source>
        <dbReference type="HAMAP-Rule" id="MF_00197"/>
    </source>
</evidence>
<feature type="chain" id="PRO_1000204058" description="Diaminopimelate epimerase">
    <location>
        <begin position="1"/>
        <end position="274"/>
    </location>
</feature>
<feature type="active site" description="Proton donor" evidence="1">
    <location>
        <position position="73"/>
    </location>
</feature>
<feature type="active site" description="Proton acceptor" evidence="1">
    <location>
        <position position="217"/>
    </location>
</feature>
<feature type="binding site" evidence="1">
    <location>
        <position position="11"/>
    </location>
    <ligand>
        <name>substrate</name>
    </ligand>
</feature>
<feature type="binding site" evidence="1">
    <location>
        <position position="44"/>
    </location>
    <ligand>
        <name>substrate</name>
    </ligand>
</feature>
<feature type="binding site" evidence="1">
    <location>
        <position position="64"/>
    </location>
    <ligand>
        <name>substrate</name>
    </ligand>
</feature>
<feature type="binding site" evidence="1">
    <location>
        <begin position="74"/>
        <end position="75"/>
    </location>
    <ligand>
        <name>substrate</name>
    </ligand>
</feature>
<feature type="binding site" evidence="1">
    <location>
        <position position="157"/>
    </location>
    <ligand>
        <name>substrate</name>
    </ligand>
</feature>
<feature type="binding site" evidence="1">
    <location>
        <position position="190"/>
    </location>
    <ligand>
        <name>substrate</name>
    </ligand>
</feature>
<feature type="binding site" evidence="1">
    <location>
        <begin position="208"/>
        <end position="209"/>
    </location>
    <ligand>
        <name>substrate</name>
    </ligand>
</feature>
<feature type="binding site" evidence="1">
    <location>
        <begin position="218"/>
        <end position="219"/>
    </location>
    <ligand>
        <name>substrate</name>
    </ligand>
</feature>
<feature type="site" description="Could be important to modulate the pK values of the two catalytic cysteine residues" evidence="1">
    <location>
        <position position="159"/>
    </location>
</feature>
<feature type="site" description="Could be important to modulate the pK values of the two catalytic cysteine residues" evidence="1">
    <location>
        <position position="208"/>
    </location>
</feature>
<feature type="site" description="Important for dimerization" evidence="1">
    <location>
        <position position="268"/>
    </location>
</feature>
<accession>C4ZZ73</accession>